<keyword id="KW-0903">Direct protein sequencing</keyword>
<keyword id="KW-0964">Secreted</keyword>
<keyword id="KW-0732">Signal</keyword>
<protein>
    <recommendedName>
        <fullName>Shematrin-like protein 1</fullName>
    </recommendedName>
</protein>
<name>SLP1_PINMA</name>
<proteinExistence type="evidence at protein level"/>
<accession>P86949</accession>
<feature type="signal peptide" evidence="1">
    <location>
        <begin position="1"/>
        <end position="16"/>
    </location>
</feature>
<feature type="chain" id="PRO_0000413084" description="Shematrin-like protein 1" evidence="1">
    <location>
        <begin position="17"/>
        <end position="336"/>
    </location>
</feature>
<feature type="sequence conflict" description="In Ref. 1; GT279430." evidence="4" ref="1">
    <original>L</original>
    <variation>H</variation>
    <location>
        <position position="99"/>
    </location>
</feature>
<feature type="sequence conflict" description="In Ref. 1; GT283543." evidence="4" ref="1">
    <original>S</original>
    <variation>N</variation>
    <location>
        <position position="124"/>
    </location>
</feature>
<feature type="sequence conflict" description="In Ref. 1; GT277828." evidence="4" ref="1">
    <original>S</original>
    <variation>T</variation>
    <location>
        <position position="126"/>
    </location>
</feature>
<feature type="sequence conflict" description="In Ref. 1; GT283446." evidence="4" ref="1">
    <original>P</original>
    <variation>S</variation>
    <location>
        <position position="136"/>
    </location>
</feature>
<feature type="sequence conflict" description="In Ref. 1; GT277828." evidence="4" ref="1">
    <original>G</original>
    <variation>R</variation>
    <location>
        <position position="138"/>
    </location>
</feature>
<feature type="sequence conflict" description="In Ref. 1; GT283446." evidence="4" ref="1">
    <original>G</original>
    <variation>R</variation>
    <location>
        <position position="139"/>
    </location>
</feature>
<feature type="sequence conflict" description="In Ref. 1; GT283446/GT282227." evidence="4" ref="1">
    <original>G</original>
    <variation>R</variation>
    <location>
        <position position="150"/>
    </location>
</feature>
<feature type="sequence conflict" description="In Ref. 1; GT282227." evidence="4" ref="1">
    <original>G</original>
    <variation>R</variation>
    <location>
        <position position="152"/>
    </location>
</feature>
<feature type="sequence conflict" description="In Ref. 1; GT283446/GT279835." evidence="4" ref="1">
    <original>G</original>
    <variation>R</variation>
    <location>
        <position position="164"/>
    </location>
</feature>
<feature type="sequence conflict" description="In Ref. 1; GT280050." evidence="4" ref="1">
    <original>G</original>
    <variation>R</variation>
    <location>
        <position position="169"/>
    </location>
</feature>
<feature type="sequence conflict" description="In Ref. 1; GT280050/GT280887/GT282493." evidence="4" ref="1">
    <original>G</original>
    <variation>S</variation>
    <location>
        <position position="183"/>
    </location>
</feature>
<feature type="sequence conflict" description="In Ref. 1; GT281002." evidence="4" ref="1">
    <original>ISSPTSGVTIPYGGALGLYGGYGGYGLGSTYGGY</original>
    <variation>M</variation>
    <location>
        <begin position="194"/>
        <end position="227"/>
    </location>
</feature>
<feature type="sequence conflict" description="In Ref. 1; GT279725." evidence="4" ref="1">
    <original>P</original>
    <variation>S</variation>
    <location>
        <position position="204"/>
    </location>
</feature>
<feature type="sequence conflict" description="In Ref. 1; GT279725." evidence="4" ref="1">
    <original>GL</original>
    <variation>RM</variation>
    <location>
        <begin position="210"/>
        <end position="211"/>
    </location>
</feature>
<feature type="sequence conflict" description="In Ref. 1; GT284191." evidence="4" ref="1">
    <original>L</original>
    <variation>M</variation>
    <location>
        <position position="211"/>
    </location>
</feature>
<dbReference type="EMBL" id="GT277828">
    <property type="status" value="NOT_ANNOTATED_CDS"/>
    <property type="molecule type" value="mRNA"/>
</dbReference>
<dbReference type="EMBL" id="GT279244">
    <property type="status" value="NOT_ANNOTATED_CDS"/>
    <property type="molecule type" value="mRNA"/>
</dbReference>
<dbReference type="EMBL" id="GT279430">
    <property type="status" value="NOT_ANNOTATED_CDS"/>
    <property type="molecule type" value="mRNA"/>
</dbReference>
<dbReference type="EMBL" id="GT279725">
    <property type="status" value="NOT_ANNOTATED_CDS"/>
    <property type="molecule type" value="mRNA"/>
</dbReference>
<dbReference type="EMBL" id="GT279835">
    <property type="status" value="NOT_ANNOTATED_CDS"/>
    <property type="molecule type" value="mRNA"/>
</dbReference>
<dbReference type="EMBL" id="GT279874">
    <property type="status" value="NOT_ANNOTATED_CDS"/>
    <property type="molecule type" value="mRNA"/>
</dbReference>
<dbReference type="EMBL" id="GT280050">
    <property type="status" value="NOT_ANNOTATED_CDS"/>
    <property type="molecule type" value="mRNA"/>
</dbReference>
<dbReference type="EMBL" id="GT280271">
    <property type="status" value="NOT_ANNOTATED_CDS"/>
    <property type="molecule type" value="mRNA"/>
</dbReference>
<dbReference type="EMBL" id="GT280629">
    <property type="status" value="NOT_ANNOTATED_CDS"/>
    <property type="molecule type" value="mRNA"/>
</dbReference>
<dbReference type="EMBL" id="GT280763">
    <property type="status" value="NOT_ANNOTATED_CDS"/>
    <property type="molecule type" value="mRNA"/>
</dbReference>
<dbReference type="EMBL" id="GT280887">
    <property type="status" value="NOT_ANNOTATED_CDS"/>
    <property type="molecule type" value="mRNA"/>
</dbReference>
<dbReference type="EMBL" id="GT281002">
    <property type="status" value="NOT_ANNOTATED_CDS"/>
    <property type="molecule type" value="mRNA"/>
</dbReference>
<dbReference type="EMBL" id="GT281306">
    <property type="status" value="NOT_ANNOTATED_CDS"/>
    <property type="molecule type" value="mRNA"/>
</dbReference>
<dbReference type="EMBL" id="GT281323">
    <property type="status" value="NOT_ANNOTATED_CDS"/>
    <property type="molecule type" value="mRNA"/>
</dbReference>
<dbReference type="EMBL" id="GT281328">
    <property type="status" value="NOT_ANNOTATED_CDS"/>
    <property type="molecule type" value="mRNA"/>
</dbReference>
<dbReference type="EMBL" id="GT281929">
    <property type="status" value="NOT_ANNOTATED_CDS"/>
    <property type="molecule type" value="mRNA"/>
</dbReference>
<dbReference type="EMBL" id="GT281981">
    <property type="status" value="NOT_ANNOTATED_CDS"/>
    <property type="molecule type" value="mRNA"/>
</dbReference>
<dbReference type="EMBL" id="GT282227">
    <property type="status" value="NOT_ANNOTATED_CDS"/>
    <property type="molecule type" value="mRNA"/>
</dbReference>
<dbReference type="EMBL" id="GT282493">
    <property type="status" value="NOT_ANNOTATED_CDS"/>
    <property type="molecule type" value="mRNA"/>
</dbReference>
<dbReference type="EMBL" id="GT282546">
    <property type="status" value="NOT_ANNOTATED_CDS"/>
    <property type="molecule type" value="mRNA"/>
</dbReference>
<dbReference type="EMBL" id="GT282619">
    <property type="status" value="NOT_ANNOTATED_CDS"/>
    <property type="molecule type" value="mRNA"/>
</dbReference>
<dbReference type="EMBL" id="GT283446">
    <property type="status" value="NOT_ANNOTATED_CDS"/>
    <property type="molecule type" value="mRNA"/>
</dbReference>
<dbReference type="EMBL" id="GT283543">
    <property type="status" value="NOT_ANNOTATED_CDS"/>
    <property type="molecule type" value="mRNA"/>
</dbReference>
<dbReference type="EMBL" id="GT284078">
    <property type="status" value="NOT_ANNOTATED_CDS"/>
    <property type="molecule type" value="mRNA"/>
</dbReference>
<dbReference type="EMBL" id="GT284191">
    <property type="status" value="NOT_ANNOTATED_CDS"/>
    <property type="molecule type" value="mRNA"/>
</dbReference>
<dbReference type="EMBL" id="GT284329">
    <property type="status" value="NOT_ANNOTATED_CDS"/>
    <property type="molecule type" value="mRNA"/>
</dbReference>
<dbReference type="EMBL" id="EZ420070">
    <property type="status" value="NOT_ANNOTATED_CDS"/>
    <property type="molecule type" value="mRNA"/>
</dbReference>
<dbReference type="GO" id="GO:0005576">
    <property type="term" value="C:extracellular region"/>
    <property type="evidence" value="ECO:0007669"/>
    <property type="project" value="UniProtKB-SubCell"/>
</dbReference>
<evidence type="ECO:0000255" key="1"/>
<evidence type="ECO:0000269" key="2">
    <source>
    </source>
</evidence>
<evidence type="ECO:0000269" key="3">
    <source>
    </source>
</evidence>
<evidence type="ECO:0000305" key="4"/>
<comment type="subcellular location">
    <subcellularLocation>
        <location evidence="3">Secreted</location>
    </subcellularLocation>
</comment>
<comment type="tissue specificity">
    <text evidence="3">Prismatic layer of shell (at protein level). Expressed primarily in the mantle with highest level in the mantle edge and lower level in the mantle pallium.</text>
</comment>
<comment type="sequence caution" evidence="4">
    <conflict type="frameshift">
        <sequence resource="EMBL" id="GT280050"/>
    </conflict>
</comment>
<comment type="sequence caution" evidence="4">
    <conflict type="miscellaneous discrepancy">
        <sequence resource="EMBL" id="GT284329"/>
    </conflict>
    <text>Premature stop codon at position 197.</text>
</comment>
<sequence length="336" mass="32794">MLRFIAIVALIATVNAKGGTYGIGVLPSVTYVSGGGGGYPGIYGTYGGGFPGIYGGFGPGGVYGSINSYGGVSTGAYGLYGTSPAVRGAAQGAAAASALGIASGVPSRVSGSSIGIGGGRALVSGSATPIGYYGVPYGGYGYGVPSYGYGYGYPSYGISYGYPGYGYGGYGGYGYPDVAYFGGSTYGNLATGAISSPTSGVTIPYGGALGLYGGYGGYGLGSTYGGYGYGVPSYGYGYGYPSYGISYGYPGYGYGGYGGYGYPDVAHFGGSTYGNLATGAISSPTSGVTIPYGGALGLYGGYGSYGYGPGIYGGGIYGSGGGIYSGGATIIRRKKY</sequence>
<organism>
    <name type="scientific">Pinctada maxima</name>
    <name type="common">Silver-lipped pearl oyster</name>
    <name type="synonym">White-lipped pearl oyster</name>
    <dbReference type="NCBI Taxonomy" id="104660"/>
    <lineage>
        <taxon>Eukaryota</taxon>
        <taxon>Metazoa</taxon>
        <taxon>Spiralia</taxon>
        <taxon>Lophotrochozoa</taxon>
        <taxon>Mollusca</taxon>
        <taxon>Bivalvia</taxon>
        <taxon>Autobranchia</taxon>
        <taxon>Pteriomorphia</taxon>
        <taxon>Pterioida</taxon>
        <taxon>Pterioidea</taxon>
        <taxon>Pteriidae</taxon>
        <taxon>Pinctada</taxon>
    </lineage>
</organism>
<reference evidence="4" key="1">
    <citation type="journal article" date="2010" name="Mol. Biol. Evol.">
        <title>Parallel evolution of nacre building gene sets in molluscs.</title>
        <authorList>
            <person name="Jackson D.J."/>
            <person name="McDougall C."/>
            <person name="Woodcroft B."/>
            <person name="Moase P."/>
            <person name="Rose R.A."/>
            <person name="Kube M."/>
            <person name="Reinhardt R."/>
            <person name="Rokhsar D.S."/>
            <person name="Montagnani C."/>
            <person name="Joubert C."/>
            <person name="Piquemal D."/>
            <person name="Degnan B.M."/>
        </authorList>
    </citation>
    <scope>NUCLEOTIDE SEQUENCE [MRNA]</scope>
    <scope>IDENTIFICATION</scope>
    <source>
        <tissue evidence="2">Mantle</tissue>
    </source>
</reference>
<reference key="2">
    <citation type="journal article" date="2012" name="Proc. Natl. Acad. Sci. U.S.A.">
        <title>Different secretory repertoires control the biomineralization processes of prism and nacre deposition of the pearl oyster shell.</title>
        <authorList>
            <person name="Marie B."/>
            <person name="Joubert C."/>
            <person name="Tayale A."/>
            <person name="Zanella-Cleon I."/>
            <person name="Belliard C."/>
            <person name="Piquemal D."/>
            <person name="Cochennec-Laureau N."/>
            <person name="Marin F."/>
            <person name="Gueguen Y."/>
            <person name="Montagnani C."/>
        </authorList>
    </citation>
    <scope>PROTEIN SEQUENCE OF 88-120</scope>
    <scope>SUBCELLULAR LOCATION</scope>
    <scope>TISSUE SPECIFICITY</scope>
    <source>
        <tissue>Shell</tissue>
    </source>
</reference>